<feature type="chain" id="PRO_0000279104" description="Transposon Ty1-LR3 Gag-Pol polyprotein">
    <location>
        <begin position="1"/>
        <end position="1755"/>
    </location>
</feature>
<feature type="chain" id="PRO_0000279105" description="Capsid protein" evidence="1">
    <location>
        <begin position="1"/>
        <end position="401"/>
    </location>
</feature>
<feature type="chain" id="PRO_0000279106" description="Ty1 protease" evidence="1">
    <location>
        <begin position="402"/>
        <end position="582"/>
    </location>
</feature>
<feature type="chain" id="PRO_0000279107" description="Integrase" evidence="1">
    <location>
        <begin position="583"/>
        <end position="1217"/>
    </location>
</feature>
<feature type="chain" id="PRO_0000279108" description="Reverse transcriptase/ribonuclease H" evidence="1">
    <location>
        <begin position="1218"/>
        <end position="1755"/>
    </location>
</feature>
<feature type="domain" description="Integrase catalytic" evidence="3">
    <location>
        <begin position="660"/>
        <end position="829"/>
    </location>
</feature>
<feature type="domain" description="Reverse transcriptase Ty1/copia-type">
    <location>
        <begin position="1338"/>
        <end position="1476"/>
    </location>
</feature>
<feature type="domain" description="RNase H Ty1/copia-type">
    <location>
        <begin position="1610"/>
        <end position="1752"/>
    </location>
</feature>
<feature type="region of interest" description="Disordered" evidence="5">
    <location>
        <begin position="1"/>
        <end position="93"/>
    </location>
</feature>
<feature type="region of interest" description="Disordered" evidence="5">
    <location>
        <begin position="126"/>
        <end position="173"/>
    </location>
</feature>
<feature type="region of interest" description="RNA-binding" evidence="1">
    <location>
        <begin position="299"/>
        <end position="401"/>
    </location>
</feature>
<feature type="region of interest" description="Disordered" evidence="5">
    <location>
        <begin position="352"/>
        <end position="421"/>
    </location>
</feature>
<feature type="region of interest" description="Integrase-type zinc finger-like">
    <location>
        <begin position="583"/>
        <end position="640"/>
    </location>
</feature>
<feature type="region of interest" description="Disordered" evidence="5">
    <location>
        <begin position="956"/>
        <end position="1087"/>
    </location>
</feature>
<feature type="region of interest" description="Disordered" evidence="5">
    <location>
        <begin position="1092"/>
        <end position="1111"/>
    </location>
</feature>
<feature type="region of interest" description="Disordered" evidence="5">
    <location>
        <begin position="1129"/>
        <end position="1172"/>
    </location>
</feature>
<feature type="short sequence motif" description="Bipartite nuclear localization signal" evidence="1">
    <location>
        <begin position="1178"/>
        <end position="1212"/>
    </location>
</feature>
<feature type="compositionally biased region" description="Low complexity" evidence="5">
    <location>
        <begin position="1"/>
        <end position="16"/>
    </location>
</feature>
<feature type="compositionally biased region" description="Polar residues" evidence="5">
    <location>
        <begin position="48"/>
        <end position="60"/>
    </location>
</feature>
<feature type="compositionally biased region" description="Polar residues" evidence="5">
    <location>
        <begin position="127"/>
        <end position="152"/>
    </location>
</feature>
<feature type="compositionally biased region" description="Low complexity" evidence="5">
    <location>
        <begin position="153"/>
        <end position="165"/>
    </location>
</feature>
<feature type="compositionally biased region" description="Low complexity" evidence="5">
    <location>
        <begin position="402"/>
        <end position="418"/>
    </location>
</feature>
<feature type="compositionally biased region" description="Low complexity" evidence="5">
    <location>
        <begin position="960"/>
        <end position="969"/>
    </location>
</feature>
<feature type="compositionally biased region" description="Polar residues" evidence="5">
    <location>
        <begin position="1005"/>
        <end position="1015"/>
    </location>
</feature>
<feature type="compositionally biased region" description="Basic and acidic residues" evidence="5">
    <location>
        <begin position="1038"/>
        <end position="1052"/>
    </location>
</feature>
<feature type="compositionally biased region" description="Polar residues" evidence="5">
    <location>
        <begin position="1053"/>
        <end position="1082"/>
    </location>
</feature>
<feature type="compositionally biased region" description="Polar residues" evidence="5">
    <location>
        <begin position="1101"/>
        <end position="1111"/>
    </location>
</feature>
<feature type="active site" description="For protease activity; shared with dimeric partner" evidence="4">
    <location>
        <position position="461"/>
    </location>
</feature>
<feature type="binding site" evidence="3">
    <location>
        <position position="671"/>
    </location>
    <ligand>
        <name>Mg(2+)</name>
        <dbReference type="ChEBI" id="CHEBI:18420"/>
        <label>1</label>
        <note>catalytic; for integrase activity</note>
    </ligand>
</feature>
<feature type="binding site" evidence="3">
    <location>
        <position position="736"/>
    </location>
    <ligand>
        <name>Mg(2+)</name>
        <dbReference type="ChEBI" id="CHEBI:18420"/>
        <label>1</label>
        <note>catalytic; for integrase activity</note>
    </ligand>
</feature>
<feature type="binding site" evidence="3">
    <location>
        <position position="1346"/>
    </location>
    <ligand>
        <name>Mg(2+)</name>
        <dbReference type="ChEBI" id="CHEBI:18420"/>
        <label>2</label>
        <note>catalytic; for reverse transcriptase activity</note>
    </ligand>
</feature>
<feature type="binding site" evidence="3">
    <location>
        <position position="1427"/>
    </location>
    <ligand>
        <name>Mg(2+)</name>
        <dbReference type="ChEBI" id="CHEBI:18420"/>
        <label>2</label>
        <note>catalytic; for reverse transcriptase activity</note>
    </ligand>
</feature>
<feature type="binding site" evidence="3">
    <location>
        <position position="1428"/>
    </location>
    <ligand>
        <name>Mg(2+)</name>
        <dbReference type="ChEBI" id="CHEBI:18420"/>
        <label>2</label>
        <note>catalytic; for reverse transcriptase activity</note>
    </ligand>
</feature>
<feature type="binding site" evidence="3">
    <location>
        <position position="1610"/>
    </location>
    <ligand>
        <name>Mg(2+)</name>
        <dbReference type="ChEBI" id="CHEBI:18420"/>
        <label>3</label>
        <note>catalytic; for RNase H activity</note>
    </ligand>
</feature>
<feature type="binding site" evidence="3">
    <location>
        <position position="1652"/>
    </location>
    <ligand>
        <name>Mg(2+)</name>
        <dbReference type="ChEBI" id="CHEBI:18420"/>
        <label>3</label>
        <note>catalytic; for RNase H activity</note>
    </ligand>
</feature>
<feature type="binding site" evidence="3">
    <location>
        <position position="1685"/>
    </location>
    <ligand>
        <name>Mg(2+)</name>
        <dbReference type="ChEBI" id="CHEBI:18420"/>
        <label>3</label>
        <note>catalytic; for RNase H activity</note>
    </ligand>
</feature>
<feature type="site" description="Cleavage; by Ty1 protease" evidence="1">
    <location>
        <begin position="401"/>
        <end position="402"/>
    </location>
</feature>
<feature type="site" description="Cleavage; by Ty1 protease" evidence="1">
    <location>
        <begin position="582"/>
        <end position="583"/>
    </location>
</feature>
<feature type="site" description="Cleavage; by Ty1 protease" evidence="1">
    <location>
        <begin position="1217"/>
        <end position="1218"/>
    </location>
</feature>
<feature type="modified residue" description="Phosphoserine" evidence="2">
    <location>
        <position position="416"/>
    </location>
</feature>
<keyword id="KW-0064">Aspartyl protease</keyword>
<keyword id="KW-0067">ATP-binding</keyword>
<keyword id="KW-0963">Cytoplasm</keyword>
<keyword id="KW-0229">DNA integration</keyword>
<keyword id="KW-0233">DNA recombination</keyword>
<keyword id="KW-0238">DNA-binding</keyword>
<keyword id="KW-0239">DNA-directed DNA polymerase</keyword>
<keyword id="KW-0255">Endonuclease</keyword>
<keyword id="KW-0378">Hydrolase</keyword>
<keyword id="KW-0460">Magnesium</keyword>
<keyword id="KW-0479">Metal-binding</keyword>
<keyword id="KW-0511">Multifunctional enzyme</keyword>
<keyword id="KW-0540">Nuclease</keyword>
<keyword id="KW-0547">Nucleotide-binding</keyword>
<keyword id="KW-0548">Nucleotidyltransferase</keyword>
<keyword id="KW-0539">Nucleus</keyword>
<keyword id="KW-0597">Phosphoprotein</keyword>
<keyword id="KW-0645">Protease</keyword>
<keyword id="KW-1185">Reference proteome</keyword>
<keyword id="KW-0688">Ribosomal frameshifting</keyword>
<keyword id="KW-0694">RNA-binding</keyword>
<keyword id="KW-0695">RNA-directed DNA polymerase</keyword>
<keyword id="KW-0808">Transferase</keyword>
<keyword id="KW-0814">Transposable element</keyword>
<keyword id="KW-0815">Transposition</keyword>
<keyword id="KW-1188">Viral release from host cell</keyword>
<keyword id="KW-0917">Virion maturation</keyword>
<keyword id="KW-0862">Zinc</keyword>
<keyword id="KW-0863">Zinc-finger</keyword>
<dbReference type="EC" id="3.4.23.-"/>
<dbReference type="EC" id="2.7.7.49"/>
<dbReference type="EC" id="2.7.7.7"/>
<dbReference type="EC" id="3.1.26.4"/>
<dbReference type="EMBL" id="U19027">
    <property type="status" value="NOT_ANNOTATED_CDS"/>
    <property type="molecule type" value="Genomic_DNA"/>
</dbReference>
<dbReference type="EMBL" id="BK006945">
    <property type="protein sequence ID" value="DAA09544.1"/>
    <property type="molecule type" value="Genomic_DNA"/>
</dbReference>
<dbReference type="PIR" id="S69963">
    <property type="entry name" value="S69963"/>
</dbReference>
<dbReference type="RefSeq" id="NP_058171.1">
    <molecule id="P0C2I6-1"/>
    <property type="nucleotide sequence ID" value="NM_001184408.2"/>
</dbReference>
<dbReference type="BioGRID" id="31497">
    <property type="interactions" value="11"/>
</dbReference>
<dbReference type="FunCoup" id="P0C2I6">
    <property type="interactions" value="92"/>
</dbReference>
<dbReference type="IntAct" id="P0C2I6">
    <property type="interactions" value="2"/>
</dbReference>
<dbReference type="GlyGen" id="P0C2I6">
    <property type="glycosylation" value="3 sites"/>
</dbReference>
<dbReference type="iPTMnet" id="P0C2I6"/>
<dbReference type="PaxDb" id="4932-YLR227W-B"/>
<dbReference type="PeptideAtlas" id="P0C2I6"/>
<dbReference type="GeneID" id="850927"/>
<dbReference type="KEGG" id="sce:YLR227W-B"/>
<dbReference type="AGR" id="SGD:S000007376"/>
<dbReference type="SGD" id="S000007376">
    <property type="gene designation" value="YLR227W-B"/>
</dbReference>
<dbReference type="VEuPathDB" id="FungiDB:YLR227W-B"/>
<dbReference type="eggNOG" id="KOG0017">
    <property type="taxonomic scope" value="Eukaryota"/>
</dbReference>
<dbReference type="HOGENOM" id="CLU_244151_0_0_1"/>
<dbReference type="InParanoid" id="P0C2I6"/>
<dbReference type="OrthoDB" id="5423336at2759"/>
<dbReference type="Proteomes" id="UP000002311">
    <property type="component" value="Chromosome XII"/>
</dbReference>
<dbReference type="RNAct" id="P0C2I6">
    <property type="molecule type" value="protein"/>
</dbReference>
<dbReference type="GO" id="GO:0005737">
    <property type="term" value="C:cytoplasm"/>
    <property type="evidence" value="ECO:0007669"/>
    <property type="project" value="UniProtKB-SubCell"/>
</dbReference>
<dbReference type="GO" id="GO:0005634">
    <property type="term" value="C:nucleus"/>
    <property type="evidence" value="ECO:0000314"/>
    <property type="project" value="SGD"/>
</dbReference>
<dbReference type="GO" id="GO:0004190">
    <property type="term" value="F:aspartic-type endopeptidase activity"/>
    <property type="evidence" value="ECO:0007669"/>
    <property type="project" value="UniProtKB-KW"/>
</dbReference>
<dbReference type="GO" id="GO:0005524">
    <property type="term" value="F:ATP binding"/>
    <property type="evidence" value="ECO:0007669"/>
    <property type="project" value="UniProtKB-KW"/>
</dbReference>
<dbReference type="GO" id="GO:0003677">
    <property type="term" value="F:DNA binding"/>
    <property type="evidence" value="ECO:0007669"/>
    <property type="project" value="UniProtKB-KW"/>
</dbReference>
<dbReference type="GO" id="GO:0003887">
    <property type="term" value="F:DNA-directed DNA polymerase activity"/>
    <property type="evidence" value="ECO:0007669"/>
    <property type="project" value="UniProtKB-KW"/>
</dbReference>
<dbReference type="GO" id="GO:0003723">
    <property type="term" value="F:RNA binding"/>
    <property type="evidence" value="ECO:0007669"/>
    <property type="project" value="UniProtKB-KW"/>
</dbReference>
<dbReference type="GO" id="GO:0003964">
    <property type="term" value="F:RNA-directed DNA polymerase activity"/>
    <property type="evidence" value="ECO:0007669"/>
    <property type="project" value="UniProtKB-KW"/>
</dbReference>
<dbReference type="GO" id="GO:0004523">
    <property type="term" value="F:RNA-DNA hybrid ribonuclease activity"/>
    <property type="evidence" value="ECO:0007669"/>
    <property type="project" value="UniProtKB-EC"/>
</dbReference>
<dbReference type="GO" id="GO:0008270">
    <property type="term" value="F:zinc ion binding"/>
    <property type="evidence" value="ECO:0007669"/>
    <property type="project" value="UniProtKB-KW"/>
</dbReference>
<dbReference type="GO" id="GO:0015074">
    <property type="term" value="P:DNA integration"/>
    <property type="evidence" value="ECO:0007669"/>
    <property type="project" value="UniProtKB-KW"/>
</dbReference>
<dbReference type="GO" id="GO:0006310">
    <property type="term" value="P:DNA recombination"/>
    <property type="evidence" value="ECO:0007669"/>
    <property type="project" value="UniProtKB-KW"/>
</dbReference>
<dbReference type="GO" id="GO:0006508">
    <property type="term" value="P:proteolysis"/>
    <property type="evidence" value="ECO:0007669"/>
    <property type="project" value="UniProtKB-KW"/>
</dbReference>
<dbReference type="GO" id="GO:0032196">
    <property type="term" value="P:transposition"/>
    <property type="evidence" value="ECO:0007669"/>
    <property type="project" value="UniProtKB-KW"/>
</dbReference>
<dbReference type="GO" id="GO:0075523">
    <property type="term" value="P:viral translational frameshifting"/>
    <property type="evidence" value="ECO:0007669"/>
    <property type="project" value="UniProtKB-KW"/>
</dbReference>
<dbReference type="CDD" id="cd09272">
    <property type="entry name" value="RNase_HI_RT_Ty1"/>
    <property type="match status" value="1"/>
</dbReference>
<dbReference type="FunFam" id="3.30.420.10:FF:000050">
    <property type="entry name" value="Transposon Ty2-DR3 Gag-Pol polyprotein"/>
    <property type="match status" value="1"/>
</dbReference>
<dbReference type="Gene3D" id="3.30.420.10">
    <property type="entry name" value="Ribonuclease H-like superfamily/Ribonuclease H"/>
    <property type="match status" value="1"/>
</dbReference>
<dbReference type="InterPro" id="IPR001969">
    <property type="entry name" value="Aspartic_peptidase_AS"/>
</dbReference>
<dbReference type="InterPro" id="IPR043502">
    <property type="entry name" value="DNA/RNA_pol_sf"/>
</dbReference>
<dbReference type="InterPro" id="IPR001584">
    <property type="entry name" value="Integrase_cat-core"/>
</dbReference>
<dbReference type="InterPro" id="IPR039537">
    <property type="entry name" value="Retrotran_Ty1/copia-like"/>
</dbReference>
<dbReference type="InterPro" id="IPR012337">
    <property type="entry name" value="RNaseH-like_sf"/>
</dbReference>
<dbReference type="InterPro" id="IPR036397">
    <property type="entry name" value="RNaseH_sf"/>
</dbReference>
<dbReference type="InterPro" id="IPR013103">
    <property type="entry name" value="RVT_2"/>
</dbReference>
<dbReference type="InterPro" id="IPR015820">
    <property type="entry name" value="TYA"/>
</dbReference>
<dbReference type="PANTHER" id="PTHR42648">
    <property type="entry name" value="TRANSPOSASE, PUTATIVE-RELATED"/>
    <property type="match status" value="1"/>
</dbReference>
<dbReference type="PANTHER" id="PTHR42648:SF11">
    <property type="entry name" value="TRANSPOSON TY4-P GAG-POL POLYPROTEIN"/>
    <property type="match status" value="1"/>
</dbReference>
<dbReference type="Pfam" id="PF00665">
    <property type="entry name" value="rve"/>
    <property type="match status" value="1"/>
</dbReference>
<dbReference type="Pfam" id="PF07727">
    <property type="entry name" value="RVT_2"/>
    <property type="match status" value="1"/>
</dbReference>
<dbReference type="Pfam" id="PF01021">
    <property type="entry name" value="TYA"/>
    <property type="match status" value="1"/>
</dbReference>
<dbReference type="SUPFAM" id="SSF56672">
    <property type="entry name" value="DNA/RNA polymerases"/>
    <property type="match status" value="1"/>
</dbReference>
<dbReference type="SUPFAM" id="SSF53098">
    <property type="entry name" value="Ribonuclease H-like"/>
    <property type="match status" value="1"/>
</dbReference>
<dbReference type="PROSITE" id="PS00141">
    <property type="entry name" value="ASP_PROTEASE"/>
    <property type="match status" value="1"/>
</dbReference>
<dbReference type="PROSITE" id="PS50994">
    <property type="entry name" value="INTEGRASE"/>
    <property type="match status" value="1"/>
</dbReference>
<evidence type="ECO:0000250" key="1"/>
<evidence type="ECO:0000250" key="2">
    <source>
        <dbReference type="UniProtKB" id="Q99231"/>
    </source>
</evidence>
<evidence type="ECO:0000255" key="3">
    <source>
        <dbReference type="PROSITE-ProRule" id="PRU00457"/>
    </source>
</evidence>
<evidence type="ECO:0000255" key="4">
    <source>
        <dbReference type="PROSITE-ProRule" id="PRU10094"/>
    </source>
</evidence>
<evidence type="ECO:0000256" key="5">
    <source>
        <dbReference type="SAM" id="MobiDB-lite"/>
    </source>
</evidence>
<organism>
    <name type="scientific">Saccharomyces cerevisiae (strain ATCC 204508 / S288c)</name>
    <name type="common">Baker's yeast</name>
    <dbReference type="NCBI Taxonomy" id="559292"/>
    <lineage>
        <taxon>Eukaryota</taxon>
        <taxon>Fungi</taxon>
        <taxon>Dikarya</taxon>
        <taxon>Ascomycota</taxon>
        <taxon>Saccharomycotina</taxon>
        <taxon>Saccharomycetes</taxon>
        <taxon>Saccharomycetales</taxon>
        <taxon>Saccharomycetaceae</taxon>
        <taxon>Saccharomyces</taxon>
    </lineage>
</organism>
<comment type="function">
    <text evidence="1">Capsid protein (CA) is the structural component of the virus-like particle (VLP), forming the shell that encapsulates the retrotransposons dimeric RNA genome. The particles are assembled from trimer-clustered units and there are holes in the capsid shells that allow for the diffusion of macromolecules. CA also has nucleocapsid-like chaperone activity, promoting primer tRNA(i)-Met annealing to the multipartite primer-binding site (PBS), dimerization of Ty1 RNA and initiation of reverse transcription (By similarity).</text>
</comment>
<comment type="function">
    <text evidence="1">The aspartyl protease (PR) mediates the proteolytic cleavages of the Gag and Gag-Pol polyproteins after assembly of the VLP.</text>
</comment>
<comment type="function">
    <text evidence="1">Reverse transcriptase/ribonuclease H (RT) is a multifunctional enzyme that catalyzes the conversion of the retro-elements RNA genome into dsDNA within the VLP. The enzyme displays a DNA polymerase activity that can copy either DNA or RNA templates, and a ribonuclease H (RNase H) activity that cleaves the RNA strand of RNA-DNA heteroduplexes during plus-strand synthesis and hydrolyzes RNA primers. The conversion leads to a linear dsDNA copy of the retrotransposon that includes long terminal repeats (LTRs) at both ends (By similarity).</text>
</comment>
<comment type="function">
    <text evidence="1">Integrase (IN) targets the VLP to the nucleus, where a subparticle preintegration complex (PIC) containing at least integrase and the newly synthesized dsDNA copy of the retrotransposon must transit the nuclear membrane. Once in the nucleus, integrase performs the integration of the dsDNA into the host genome (By similarity).</text>
</comment>
<comment type="catalytic activity">
    <reaction>
        <text>DNA(n) + a 2'-deoxyribonucleoside 5'-triphosphate = DNA(n+1) + diphosphate</text>
        <dbReference type="Rhea" id="RHEA:22508"/>
        <dbReference type="Rhea" id="RHEA-COMP:17339"/>
        <dbReference type="Rhea" id="RHEA-COMP:17340"/>
        <dbReference type="ChEBI" id="CHEBI:33019"/>
        <dbReference type="ChEBI" id="CHEBI:61560"/>
        <dbReference type="ChEBI" id="CHEBI:173112"/>
        <dbReference type="EC" id="2.7.7.49"/>
    </reaction>
</comment>
<comment type="catalytic activity">
    <reaction>
        <text>DNA(n) + a 2'-deoxyribonucleoside 5'-triphosphate = DNA(n+1) + diphosphate</text>
        <dbReference type="Rhea" id="RHEA:22508"/>
        <dbReference type="Rhea" id="RHEA-COMP:17339"/>
        <dbReference type="Rhea" id="RHEA-COMP:17340"/>
        <dbReference type="ChEBI" id="CHEBI:33019"/>
        <dbReference type="ChEBI" id="CHEBI:61560"/>
        <dbReference type="ChEBI" id="CHEBI:173112"/>
        <dbReference type="EC" id="2.7.7.7"/>
    </reaction>
</comment>
<comment type="catalytic activity">
    <reaction>
        <text>Endonucleolytic cleavage to 5'-phosphomonoester.</text>
        <dbReference type="EC" id="3.1.26.4"/>
    </reaction>
</comment>
<comment type="subunit">
    <text evidence="1">The capsid protein forms a homotrimer, from which the VLPs are assembled. The protease is a homodimer, whose active site consists of two apposed aspartic acid residues (By similarity).</text>
</comment>
<comment type="subcellular location">
    <subcellularLocation>
        <location>Cytoplasm</location>
    </subcellularLocation>
    <subcellularLocation>
        <location evidence="1">Nucleus</location>
    </subcellularLocation>
</comment>
<comment type="alternative products">
    <event type="ribosomal frameshifting"/>
    <isoform>
        <id>P0C2I6-1</id>
        <name>Transposon Ty1-LR3 Gag-Pol polyprotein</name>
        <sequence type="displayed"/>
    </isoform>
    <isoform>
        <id>P0CX75-1</id>
        <name>Transposon Ty1-LR3 Gag polyprotein</name>
        <sequence type="external"/>
    </isoform>
    <text evidence="1">The Gag-Pol polyprotein is generated by a +1 ribosomal frameshift. The ratio of Gag:Gag-Pol varies between 20:1 and 5:1 (By similarity).</text>
</comment>
<comment type="domain">
    <text evidence="1">The C-terminal RNA-binding region of CA is sufficient for all its nucleocapsid-like chaperone activities.</text>
</comment>
<comment type="domain">
    <text evidence="1">Integrase core domain contains the D-x(n)-D-x(35)-E motif, named for the phylogenetically conserved glutamic acid and aspartic acid residues and the invariant 35 amino acid spacing between the second and third acidic residues. Each acidic residue of the D,D(35)E motif is independently essential for the 3'-processing and strand transfer activities of purified integrase protein (By similarity).</text>
</comment>
<comment type="PTM">
    <text evidence="1">Initially, virus-like particles (VLPs) are composed of the structural unprocessed proteins Gag and Gag-Pol, and also contain the host initiator methionine tRNA (tRNA(i)-Met) which serves as a primer for minus-strand DNA synthesis, and a dimer of genomic Ty RNA. Processing of the polyproteins occurs within the particle and proceeds by an ordered pathway, called maturation. First, the protease (PR) is released by autocatalytic cleavage of the Gag-Pol polyprotein yielding capsid protein p45 and a Pol-p154 precursor protein. This cleavage is a prerequisite for subsequent processing of Pol-p154 at the remaining sites to release the mature structural and catalytic proteins. Maturation takes place prior to the RT reaction and is required to produce transposition-competent VLPs (By similarity).</text>
</comment>
<comment type="miscellaneous">
    <text>Retrotransposons are mobile genetic entities that are able to replicate via an RNA intermediate and a reverse transcription step. In contrast to retroviruses, retrotransposons are non-infectious, lack an envelope and remain intracellular. Ty1 retrotransposons belong to the copia elements (pseudoviridae).</text>
</comment>
<comment type="miscellaneous">
    <molecule>Isoform Transposon Ty1-LR3 Gag-Pol polyprotein</molecule>
    <text>Produced by +1 ribosomal frameshifting between codon Leu-435 and Gly-436 of the YLR227W-A ORF.</text>
</comment>
<accession>P0C2I6</accession>
<accession>D6VYM8</accession>
<name>YL13B_YEAST</name>
<sequence length="1755" mass="198405">MESQQLSQHSHISHGSACASVTSKEVHTNQDPLDVSASKTEECEKASTKANSQQTTTPASSAVPENPHHASPQPASVPPPQNGPYPQQCMMTQNQANPSGWSFYGHPSMIPYTPYQMSPMYFPPGPQSQFPQYPSSVGTPLSTPSPESGNTFTDSSSADSDMTSTKKYVRPPPMLTSPNDFPNWVKTYIKFLQNSNLGGIIPTVNGKPVRQITDDELTFLYNTFQIFAPSQFLPTWVKDILSVDYTDIMKILSKSIEKMQSDTQEANDIVTLANLQYNGSTPADAFETKVTNIIDRLNNNGIHINNKVACQLIMRGLSGEYKFLRYTRHRHLNMTVAELFLDIHAIYEEQQGSRNSKPNYRRNLSDEKNDSRSYTNTTKPKVIARNPQKTNNSKSKTARAHNVSTSNNSPSTDNDSISKSTTEPIQLNNKHDLHLGQELTESTVNHTNHSDDELPGHLLLDSGASRTLIRSAHHIHSASSNPDINVVDAQKRNIPINAIGDLQFHFQDNTKTSIKVLHTPNIAYDLLSLNELAAVDITACFTKNVLERSDGTVLAPIVQYGDFYWVSKRYLLPSNISVPTINNVHTSESTRKYPYPFIHRMLAHANAQTIRYSLKNNTITYFNESDVDWSSAIDYQCPDCLIGKSTKHRHIKGSRLKYQNSYEPFQYLHTDIFGPVHNLPKSAPSYFISFTDETTKFRWVYPLHDRREDSILDVFTTILAFIKNQFQASVLVIQMDRGSEYTNRTLHKFLEKNGITPCYTTTADSRAHGVAERLNRTLLDDCRTQLQCSGLPNHLWFSAIEFSTIVRNSLASPKSKKSASQHAGLAGLDISTLLPFGQPVIVNDHNPNSKIHPRGIPGYALHPSRNSYGYIIYLPSLKKTVDTTNYVILQGKESRLDQFNYDALTFDEDLNRLTASYHSFIASNEIQESNDLNIESDHDFQSDIELHPEQPRNVLSKAVSPTDSTPPSTHTEDSKPISEINLRAPREVDPNISESNILPSKKRSSTPQISNIESTGSGGMHKLNVPLLAPMSQSNTHESSHASKSKDFRHSDSYSNNETNHTNVPISSTGGTNNKTVPQISDQETEKRIIHRSPSIDASPPENNSSHNIVPIKTPTTVSEQNTEESIIADLPLPDPPPEPPTELSDSFKELPPINSRQTNSSLGGIGDSNAYTTINSKKRSLEDNETEIKVSRDTWNTKNMRSLEPPRSKKRIHLIAAAKAVKSIKPIRTTLRYDEAITYNKDIKEKEKYIEAYHKEVNQLLKMNTWDTDKYYDRKEIDPKRVINSMFIFNKKRDGTHKARFVARGDIQHPDTYDTGMQSNTVHHYALMTSLSLALDNNYYITQLDISSAYLYADIKEELYIRPPPHLGMNDKLIRLKKSHYGLKQSGANWYETIKSYLIKQCGMEEVRGWSCVFKNSQVTICLFVDDMILFSKDLNANKKIITTLKKQYDTKIINLGESDNEIQYDILGLEIKYQRGKYMKLGMENSLTEKIPKLNVPLNPKGRKLSAPGQPGLYIDQDELEIDEDEYKEKVHEMQKLIGLASYVGYKFRFDLLYYINTLAQHILFPSRQVLDMTYELIQFMWDTRDKQLIWHKNKPTEPDNKLVAISDASYGNQPYYKSQIGNIFLLNGKVIGGKSTKASLTCTSTTEAEIHAVSEAIPLLNNLSHLVQELNKKPIIKGLLTDSRSTISIIKSTNEEKFRNRFFGTKAMRLRDEVSGNNLYVYYIETKKNIADVMTKPLPIKTFKLLTNKWIH</sequence>
<reference key="1">
    <citation type="journal article" date="1997" name="Nature">
        <title>The nucleotide sequence of Saccharomyces cerevisiae chromosome XII.</title>
        <authorList>
            <person name="Johnston M."/>
            <person name="Hillier L.W."/>
            <person name="Riles L."/>
            <person name="Albermann K."/>
            <person name="Andre B."/>
            <person name="Ansorge W."/>
            <person name="Benes V."/>
            <person name="Brueckner M."/>
            <person name="Delius H."/>
            <person name="Dubois E."/>
            <person name="Duesterhoeft A."/>
            <person name="Entian K.-D."/>
            <person name="Floeth M."/>
            <person name="Goffeau A."/>
            <person name="Hebling U."/>
            <person name="Heumann K."/>
            <person name="Heuss-Neitzel D."/>
            <person name="Hilbert H."/>
            <person name="Hilger F."/>
            <person name="Kleine K."/>
            <person name="Koetter P."/>
            <person name="Louis E.J."/>
            <person name="Messenguy F."/>
            <person name="Mewes H.-W."/>
            <person name="Miosga T."/>
            <person name="Moestl D."/>
            <person name="Mueller-Auer S."/>
            <person name="Nentwich U."/>
            <person name="Obermaier B."/>
            <person name="Piravandi E."/>
            <person name="Pohl T.M."/>
            <person name="Portetelle D."/>
            <person name="Purnelle B."/>
            <person name="Rechmann S."/>
            <person name="Rieger M."/>
            <person name="Rinke M."/>
            <person name="Rose M."/>
            <person name="Scharfe M."/>
            <person name="Scherens B."/>
            <person name="Scholler P."/>
            <person name="Schwager C."/>
            <person name="Schwarz S."/>
            <person name="Underwood A.P."/>
            <person name="Urrestarazu L.A."/>
            <person name="Vandenbol M."/>
            <person name="Verhasselt P."/>
            <person name="Vierendeels F."/>
            <person name="Voet M."/>
            <person name="Volckaert G."/>
            <person name="Voss H."/>
            <person name="Wambutt R."/>
            <person name="Wedler E."/>
            <person name="Wedler H."/>
            <person name="Zimmermann F.K."/>
            <person name="Zollner A."/>
            <person name="Hani J."/>
            <person name="Hoheisel J.D."/>
        </authorList>
    </citation>
    <scope>NUCLEOTIDE SEQUENCE [LARGE SCALE GENOMIC DNA]</scope>
    <source>
        <strain>ATCC 204508 / S288c</strain>
    </source>
</reference>
<reference key="2">
    <citation type="journal article" date="2014" name="G3 (Bethesda)">
        <title>The reference genome sequence of Saccharomyces cerevisiae: Then and now.</title>
        <authorList>
            <person name="Engel S.R."/>
            <person name="Dietrich F.S."/>
            <person name="Fisk D.G."/>
            <person name="Binkley G."/>
            <person name="Balakrishnan R."/>
            <person name="Costanzo M.C."/>
            <person name="Dwight S.S."/>
            <person name="Hitz B.C."/>
            <person name="Karra K."/>
            <person name="Nash R.S."/>
            <person name="Weng S."/>
            <person name="Wong E.D."/>
            <person name="Lloyd P."/>
            <person name="Skrzypek M.S."/>
            <person name="Miyasato S.R."/>
            <person name="Simison M."/>
            <person name="Cherry J.M."/>
        </authorList>
    </citation>
    <scope>GENOME REANNOTATION</scope>
    <source>
        <strain>ATCC 204508 / S288c</strain>
    </source>
</reference>
<reference key="3">
    <citation type="journal article" date="1998" name="Genome Res.">
        <title>Transposable elements and genome organization: a comprehensive survey of retrotransposons revealed by the complete Saccharomyces cerevisiae genome sequence.</title>
        <authorList>
            <person name="Kim J.M."/>
            <person name="Vanguri S."/>
            <person name="Boeke J.D."/>
            <person name="Gabriel A."/>
            <person name="Voytas D.F."/>
        </authorList>
    </citation>
    <scope>NOMENCLATURE</scope>
</reference>
<reference key="4">
    <citation type="journal article" date="2005" name="Cytogenet. Genome Res.">
        <title>Happy together: the life and times of Ty retrotransposons and their hosts.</title>
        <authorList>
            <person name="Lesage P."/>
            <person name="Todeschini A.L."/>
        </authorList>
    </citation>
    <scope>REVIEW</scope>
</reference>
<reference key="5">
    <citation type="journal article" date="2005" name="Cytogenet. Genome Res.">
        <title>Reverse transcriptase and integrase of the Saccharomyces cerevisiae Ty1 element.</title>
        <authorList>
            <person name="Wilhelm F.-X."/>
            <person name="Wilhelm M."/>
            <person name="Gabriel A."/>
        </authorList>
    </citation>
    <scope>REVIEW</scope>
    <scope>DOMAINS</scope>
</reference>
<protein>
    <recommendedName>
        <fullName>Transposon Ty1-LR3 Gag-Pol polyprotein</fullName>
    </recommendedName>
    <alternativeName>
        <fullName>Gag-Pol-p199</fullName>
    </alternativeName>
    <alternativeName>
        <fullName>TY1A-TY1B</fullName>
    </alternativeName>
    <alternativeName>
        <fullName>Transposon Ty1 TYA-TYB polyprotein</fullName>
    </alternativeName>
    <alternativeName>
        <fullName>p190</fullName>
    </alternativeName>
    <component>
        <recommendedName>
            <fullName>Capsid protein</fullName>
            <shortName>CA</shortName>
        </recommendedName>
        <alternativeName>
            <fullName>Gag-p45</fullName>
        </alternativeName>
        <alternativeName>
            <fullName>p54</fullName>
        </alternativeName>
    </component>
    <component>
        <recommendedName>
            <fullName>Ty1 protease</fullName>
            <shortName>PR</shortName>
            <ecNumber>3.4.23.-</ecNumber>
        </recommendedName>
        <alternativeName>
            <fullName>Pol-p20</fullName>
        </alternativeName>
        <alternativeName>
            <fullName>p23</fullName>
        </alternativeName>
    </component>
    <component>
        <recommendedName>
            <fullName>Integrase</fullName>
            <shortName>IN</shortName>
        </recommendedName>
        <alternativeName>
            <fullName>Pol-p71</fullName>
        </alternativeName>
        <alternativeName>
            <fullName>p84</fullName>
        </alternativeName>
        <alternativeName>
            <fullName>p90</fullName>
        </alternativeName>
    </component>
    <component>
        <recommendedName>
            <fullName>Reverse transcriptase/ribonuclease H</fullName>
            <shortName>RT</shortName>
            <shortName>RT-RH</shortName>
            <ecNumber>2.7.7.49</ecNumber>
            <ecNumber>2.7.7.7</ecNumber>
            <ecNumber>3.1.26.4</ecNumber>
        </recommendedName>
        <alternativeName>
            <fullName>Pol-p63</fullName>
        </alternativeName>
        <alternativeName>
            <fullName>p60</fullName>
        </alternativeName>
    </component>
</protein>
<proteinExistence type="inferred from homology"/>
<gene>
    <name type="primary">TY1B-LR3</name>
    <name type="synonym">YLRWTy1-3 POL</name>
    <name type="ordered locus">YLR227W-B</name>
    <name type="ORF">L8083.11</name>
</gene>